<comment type="function">
    <text evidence="1">Catalyzes two activities which are involved in the cyclic version of arginine biosynthesis: the synthesis of N-acetylglutamate from glutamate and acetyl-CoA as the acetyl donor, and of ornithine by transacetylation between N(2)-acetylornithine and glutamate.</text>
</comment>
<comment type="catalytic activity">
    <reaction evidence="1">
        <text>N(2)-acetyl-L-ornithine + L-glutamate = N-acetyl-L-glutamate + L-ornithine</text>
        <dbReference type="Rhea" id="RHEA:15349"/>
        <dbReference type="ChEBI" id="CHEBI:29985"/>
        <dbReference type="ChEBI" id="CHEBI:44337"/>
        <dbReference type="ChEBI" id="CHEBI:46911"/>
        <dbReference type="ChEBI" id="CHEBI:57805"/>
        <dbReference type="EC" id="2.3.1.35"/>
    </reaction>
</comment>
<comment type="catalytic activity">
    <reaction evidence="1">
        <text>L-glutamate + acetyl-CoA = N-acetyl-L-glutamate + CoA + H(+)</text>
        <dbReference type="Rhea" id="RHEA:24292"/>
        <dbReference type="ChEBI" id="CHEBI:15378"/>
        <dbReference type="ChEBI" id="CHEBI:29985"/>
        <dbReference type="ChEBI" id="CHEBI:44337"/>
        <dbReference type="ChEBI" id="CHEBI:57287"/>
        <dbReference type="ChEBI" id="CHEBI:57288"/>
        <dbReference type="EC" id="2.3.1.1"/>
    </reaction>
</comment>
<comment type="pathway">
    <text evidence="1">Amino-acid biosynthesis; L-arginine biosynthesis; L-ornithine and N-acetyl-L-glutamate from L-glutamate and N(2)-acetyl-L-ornithine (cyclic): step 1/1.</text>
</comment>
<comment type="pathway">
    <text evidence="1">Amino-acid biosynthesis; L-arginine biosynthesis; N(2)-acetyl-L-ornithine from L-glutamate: step 1/4.</text>
</comment>
<comment type="subunit">
    <text evidence="1">Heterotetramer of two alpha and two beta chains.</text>
</comment>
<comment type="subcellular location">
    <subcellularLocation>
        <location evidence="1">Cytoplasm</location>
    </subcellularLocation>
</comment>
<comment type="similarity">
    <text evidence="1">Belongs to the ArgJ family.</text>
</comment>
<reference key="1">
    <citation type="journal article" date="2006" name="Appl. Environ. Microbiol.">
        <title>Genome sequence of the chemolithoautotrophic nitrite-oxidizing bacterium Nitrobacter winogradskyi Nb-255.</title>
        <authorList>
            <person name="Starkenburg S.R."/>
            <person name="Chain P.S.G."/>
            <person name="Sayavedra-Soto L.A."/>
            <person name="Hauser L."/>
            <person name="Land M.L."/>
            <person name="Larimer F.W."/>
            <person name="Malfatti S.A."/>
            <person name="Klotz M.G."/>
            <person name="Bottomley P.J."/>
            <person name="Arp D.J."/>
            <person name="Hickey W.J."/>
        </authorList>
    </citation>
    <scope>NUCLEOTIDE SEQUENCE [LARGE SCALE GENOMIC DNA]</scope>
    <source>
        <strain>ATCC 25391 / DSM 10237 / CIP 104748 / NCIMB 11846 / Nb-255</strain>
    </source>
</reference>
<feature type="chain" id="PRO_0000227236" description="Arginine biosynthesis bifunctional protein ArgJ alpha chain" evidence="1">
    <location>
        <begin position="1"/>
        <end position="198"/>
    </location>
</feature>
<feature type="chain" id="PRO_0000227237" description="Arginine biosynthesis bifunctional protein ArgJ beta chain" evidence="1">
    <location>
        <begin position="199"/>
        <end position="417"/>
    </location>
</feature>
<feature type="active site" description="Nucleophile" evidence="1">
    <location>
        <position position="199"/>
    </location>
</feature>
<feature type="binding site" evidence="1">
    <location>
        <position position="162"/>
    </location>
    <ligand>
        <name>substrate</name>
    </ligand>
</feature>
<feature type="binding site" evidence="1">
    <location>
        <position position="188"/>
    </location>
    <ligand>
        <name>substrate</name>
    </ligand>
</feature>
<feature type="binding site" evidence="1">
    <location>
        <position position="199"/>
    </location>
    <ligand>
        <name>substrate</name>
    </ligand>
</feature>
<feature type="binding site" evidence="1">
    <location>
        <position position="289"/>
    </location>
    <ligand>
        <name>substrate</name>
    </ligand>
</feature>
<feature type="binding site" evidence="1">
    <location>
        <position position="412"/>
    </location>
    <ligand>
        <name>substrate</name>
    </ligand>
</feature>
<feature type="binding site" evidence="1">
    <location>
        <position position="417"/>
    </location>
    <ligand>
        <name>substrate</name>
    </ligand>
</feature>
<feature type="site" description="Involved in the stabilization of negative charge on the oxyanion by the formation of the oxyanion hole" evidence="1">
    <location>
        <position position="125"/>
    </location>
</feature>
<feature type="site" description="Involved in the stabilization of negative charge on the oxyanion by the formation of the oxyanion hole" evidence="1">
    <location>
        <position position="126"/>
    </location>
</feature>
<feature type="site" description="Cleavage; by autolysis" evidence="1">
    <location>
        <begin position="198"/>
        <end position="199"/>
    </location>
</feature>
<sequence>MSTAISPLAPTDVPDLPEIAGVRLATAAAGIRYKGRTDVLLALLDEGTTVAGVFTRSRCPSAPVEWCRARLKDGHHAKAGLALVVNSGNANAFTGKTGRQATKLTAGIAAKAAGCKASDIYLASTGVIGEPLDATKFNGVLETLASEAAPDRWMDAARAIMTTDTFPKVATARVKLGKAAVTINGIAKGAGMIAPDMATMLSFIFTDAPITATALQSLLKSGVEDTFNAVTIDSDTSTSDTLLAFATGAAGARGAPRISRAGDPRLKAFVKAFHGVLADLAEQVARDGEGARKLVEVIVEGATSKASARKIAKSIANSPLVKTAIAGEDANWGRVVMAVGKAGEPADRDKLSIYFNGIRVAKSGARDPSYDEAEVSKAMKNDRIQIKTTLGLGKGRDRVLTCDLTKEYVAINGDYRS</sequence>
<gene>
    <name evidence="1" type="primary">argJ</name>
    <name type="ordered locus">Nwi_0388</name>
</gene>
<proteinExistence type="inferred from homology"/>
<organism>
    <name type="scientific">Nitrobacter winogradskyi (strain ATCC 25391 / DSM 10237 / CIP 104748 / NCIMB 11846 / Nb-255)</name>
    <dbReference type="NCBI Taxonomy" id="323098"/>
    <lineage>
        <taxon>Bacteria</taxon>
        <taxon>Pseudomonadati</taxon>
        <taxon>Pseudomonadota</taxon>
        <taxon>Alphaproteobacteria</taxon>
        <taxon>Hyphomicrobiales</taxon>
        <taxon>Nitrobacteraceae</taxon>
        <taxon>Nitrobacter</taxon>
    </lineage>
</organism>
<name>ARGJ_NITWN</name>
<protein>
    <recommendedName>
        <fullName evidence="1">Arginine biosynthesis bifunctional protein ArgJ</fullName>
    </recommendedName>
    <domain>
        <recommendedName>
            <fullName evidence="1">Glutamate N-acetyltransferase</fullName>
            <ecNumber evidence="1">2.3.1.35</ecNumber>
        </recommendedName>
        <alternativeName>
            <fullName evidence="1">Ornithine acetyltransferase</fullName>
            <shortName evidence="1">OATase</shortName>
        </alternativeName>
        <alternativeName>
            <fullName evidence="1">Ornithine transacetylase</fullName>
        </alternativeName>
    </domain>
    <domain>
        <recommendedName>
            <fullName evidence="1">Amino-acid acetyltransferase</fullName>
            <ecNumber evidence="1">2.3.1.1</ecNumber>
        </recommendedName>
        <alternativeName>
            <fullName evidence="1">N-acetylglutamate synthase</fullName>
            <shortName evidence="1">AGSase</shortName>
        </alternativeName>
    </domain>
    <component>
        <recommendedName>
            <fullName evidence="1">Arginine biosynthesis bifunctional protein ArgJ alpha chain</fullName>
        </recommendedName>
    </component>
    <component>
        <recommendedName>
            <fullName evidence="1">Arginine biosynthesis bifunctional protein ArgJ beta chain</fullName>
        </recommendedName>
    </component>
</protein>
<keyword id="KW-0012">Acyltransferase</keyword>
<keyword id="KW-0028">Amino-acid biosynthesis</keyword>
<keyword id="KW-0055">Arginine biosynthesis</keyword>
<keyword id="KW-0068">Autocatalytic cleavage</keyword>
<keyword id="KW-0963">Cytoplasm</keyword>
<keyword id="KW-0511">Multifunctional enzyme</keyword>
<keyword id="KW-1185">Reference proteome</keyword>
<keyword id="KW-0808">Transferase</keyword>
<accession>Q3SVN6</accession>
<dbReference type="EC" id="2.3.1.35" evidence="1"/>
<dbReference type="EC" id="2.3.1.1" evidence="1"/>
<dbReference type="EMBL" id="CP000115">
    <property type="protein sequence ID" value="ABA03655.1"/>
    <property type="molecule type" value="Genomic_DNA"/>
</dbReference>
<dbReference type="RefSeq" id="WP_011313719.1">
    <property type="nucleotide sequence ID" value="NC_007406.1"/>
</dbReference>
<dbReference type="SMR" id="Q3SVN6"/>
<dbReference type="STRING" id="323098.Nwi_0388"/>
<dbReference type="MEROPS" id="T05.001"/>
<dbReference type="KEGG" id="nwi:Nwi_0388"/>
<dbReference type="eggNOG" id="COG1364">
    <property type="taxonomic scope" value="Bacteria"/>
</dbReference>
<dbReference type="HOGENOM" id="CLU_027172_1_0_5"/>
<dbReference type="OrthoDB" id="9804242at2"/>
<dbReference type="UniPathway" id="UPA00068">
    <property type="reaction ID" value="UER00106"/>
</dbReference>
<dbReference type="UniPathway" id="UPA00068">
    <property type="reaction ID" value="UER00111"/>
</dbReference>
<dbReference type="Proteomes" id="UP000002531">
    <property type="component" value="Chromosome"/>
</dbReference>
<dbReference type="GO" id="GO:0005737">
    <property type="term" value="C:cytoplasm"/>
    <property type="evidence" value="ECO:0007669"/>
    <property type="project" value="UniProtKB-SubCell"/>
</dbReference>
<dbReference type="GO" id="GO:0004358">
    <property type="term" value="F:glutamate N-acetyltransferase activity"/>
    <property type="evidence" value="ECO:0007669"/>
    <property type="project" value="UniProtKB-UniRule"/>
</dbReference>
<dbReference type="GO" id="GO:0004042">
    <property type="term" value="F:L-glutamate N-acetyltransferase activity"/>
    <property type="evidence" value="ECO:0007669"/>
    <property type="project" value="UniProtKB-UniRule"/>
</dbReference>
<dbReference type="GO" id="GO:0006526">
    <property type="term" value="P:L-arginine biosynthetic process"/>
    <property type="evidence" value="ECO:0007669"/>
    <property type="project" value="UniProtKB-UniRule"/>
</dbReference>
<dbReference type="GO" id="GO:0006592">
    <property type="term" value="P:ornithine biosynthetic process"/>
    <property type="evidence" value="ECO:0007669"/>
    <property type="project" value="TreeGrafter"/>
</dbReference>
<dbReference type="CDD" id="cd02152">
    <property type="entry name" value="OAT"/>
    <property type="match status" value="1"/>
</dbReference>
<dbReference type="FunFam" id="3.10.20.340:FF:000003">
    <property type="entry name" value="Arginine biosynthesis bifunctional protein ArgJ"/>
    <property type="match status" value="1"/>
</dbReference>
<dbReference type="FunFam" id="3.60.70.12:FF:000001">
    <property type="entry name" value="Arginine biosynthesis bifunctional protein ArgJ, chloroplastic"/>
    <property type="match status" value="1"/>
</dbReference>
<dbReference type="Gene3D" id="3.10.20.340">
    <property type="entry name" value="ArgJ beta chain, C-terminal domain"/>
    <property type="match status" value="1"/>
</dbReference>
<dbReference type="Gene3D" id="3.60.70.12">
    <property type="entry name" value="L-amino peptidase D-ALA esterase/amidase"/>
    <property type="match status" value="1"/>
</dbReference>
<dbReference type="HAMAP" id="MF_01106">
    <property type="entry name" value="ArgJ"/>
    <property type="match status" value="1"/>
</dbReference>
<dbReference type="InterPro" id="IPR002813">
    <property type="entry name" value="Arg_biosynth_ArgJ"/>
</dbReference>
<dbReference type="InterPro" id="IPR016117">
    <property type="entry name" value="ArgJ-like_dom_sf"/>
</dbReference>
<dbReference type="InterPro" id="IPR042195">
    <property type="entry name" value="ArgJ_beta_C"/>
</dbReference>
<dbReference type="NCBIfam" id="TIGR00120">
    <property type="entry name" value="ArgJ"/>
    <property type="match status" value="1"/>
</dbReference>
<dbReference type="NCBIfam" id="NF003802">
    <property type="entry name" value="PRK05388.1"/>
    <property type="match status" value="1"/>
</dbReference>
<dbReference type="PANTHER" id="PTHR23100">
    <property type="entry name" value="ARGININE BIOSYNTHESIS BIFUNCTIONAL PROTEIN ARGJ"/>
    <property type="match status" value="1"/>
</dbReference>
<dbReference type="PANTHER" id="PTHR23100:SF0">
    <property type="entry name" value="ARGININE BIOSYNTHESIS BIFUNCTIONAL PROTEIN ARGJ, MITOCHONDRIAL"/>
    <property type="match status" value="1"/>
</dbReference>
<dbReference type="Pfam" id="PF01960">
    <property type="entry name" value="ArgJ"/>
    <property type="match status" value="1"/>
</dbReference>
<dbReference type="SUPFAM" id="SSF56266">
    <property type="entry name" value="DmpA/ArgJ-like"/>
    <property type="match status" value="1"/>
</dbReference>
<evidence type="ECO:0000255" key="1">
    <source>
        <dbReference type="HAMAP-Rule" id="MF_01106"/>
    </source>
</evidence>